<gene>
    <name type="primary">nuaf-1</name>
    <name type="ORF">CBG11538</name>
</gene>
<name>CIA30_CAEBR</name>
<dbReference type="EMBL" id="HE600908">
    <property type="protein sequence ID" value="CAP30433.1"/>
    <property type="molecule type" value="Genomic_DNA"/>
</dbReference>
<dbReference type="SMR" id="Q61FQ3"/>
<dbReference type="FunCoup" id="Q61FQ3">
    <property type="interactions" value="1471"/>
</dbReference>
<dbReference type="STRING" id="6238.Q61FQ3"/>
<dbReference type="EnsemblMetazoa" id="CBG11538.1">
    <property type="protein sequence ID" value="CBG11538.1"/>
    <property type="gene ID" value="WBGene00032645"/>
</dbReference>
<dbReference type="KEGG" id="cbr:CBG_11538"/>
<dbReference type="CTD" id="8577287"/>
<dbReference type="WormBase" id="CBG11538">
    <property type="protein sequence ID" value="CBP02779"/>
    <property type="gene ID" value="WBGene00032645"/>
    <property type="gene designation" value="Cbr-nuaf-1"/>
</dbReference>
<dbReference type="eggNOG" id="KOG2435">
    <property type="taxonomic scope" value="Eukaryota"/>
</dbReference>
<dbReference type="HOGENOM" id="CLU_059028_2_2_1"/>
<dbReference type="InParanoid" id="Q61FQ3"/>
<dbReference type="OMA" id="SMKLEDR"/>
<dbReference type="OrthoDB" id="42561at2759"/>
<dbReference type="Proteomes" id="UP000008549">
    <property type="component" value="Unassembled WGS sequence"/>
</dbReference>
<dbReference type="GO" id="GO:0005739">
    <property type="term" value="C:mitochondrion"/>
    <property type="evidence" value="ECO:0000318"/>
    <property type="project" value="GO_Central"/>
</dbReference>
<dbReference type="GO" id="GO:0051082">
    <property type="term" value="F:unfolded protein binding"/>
    <property type="evidence" value="ECO:0000318"/>
    <property type="project" value="GO_Central"/>
</dbReference>
<dbReference type="GO" id="GO:0006120">
    <property type="term" value="P:mitochondrial electron transport, NADH to ubiquinone"/>
    <property type="evidence" value="ECO:0000318"/>
    <property type="project" value="GO_Central"/>
</dbReference>
<dbReference type="GO" id="GO:0032981">
    <property type="term" value="P:mitochondrial respiratory chain complex I assembly"/>
    <property type="evidence" value="ECO:0000318"/>
    <property type="project" value="GO_Central"/>
</dbReference>
<dbReference type="InterPro" id="IPR008979">
    <property type="entry name" value="Galactose-bd-like_sf"/>
</dbReference>
<dbReference type="InterPro" id="IPR013857">
    <property type="entry name" value="NADH-UbQ_OxRdtase-assoc_prot30"/>
</dbReference>
<dbReference type="InterPro" id="IPR039131">
    <property type="entry name" value="NDUFAF1"/>
</dbReference>
<dbReference type="PANTHER" id="PTHR13194">
    <property type="entry name" value="COMPLEX I INTERMEDIATE-ASSOCIATED PROTEIN 30"/>
    <property type="match status" value="1"/>
</dbReference>
<dbReference type="PANTHER" id="PTHR13194:SF18">
    <property type="entry name" value="COMPLEX I INTERMEDIATE-ASSOCIATED PROTEIN 30, MITOCHONDRIAL"/>
    <property type="match status" value="1"/>
</dbReference>
<dbReference type="Pfam" id="PF08547">
    <property type="entry name" value="CIA30"/>
    <property type="match status" value="1"/>
</dbReference>
<dbReference type="SUPFAM" id="SSF49785">
    <property type="entry name" value="Galactose-binding domain-like"/>
    <property type="match status" value="1"/>
</dbReference>
<organism>
    <name type="scientific">Caenorhabditis briggsae</name>
    <dbReference type="NCBI Taxonomy" id="6238"/>
    <lineage>
        <taxon>Eukaryota</taxon>
        <taxon>Metazoa</taxon>
        <taxon>Ecdysozoa</taxon>
        <taxon>Nematoda</taxon>
        <taxon>Chromadorea</taxon>
        <taxon>Rhabditida</taxon>
        <taxon>Rhabditina</taxon>
        <taxon>Rhabditomorpha</taxon>
        <taxon>Rhabditoidea</taxon>
        <taxon>Rhabditidae</taxon>
        <taxon>Peloderinae</taxon>
        <taxon>Caenorhabditis</taxon>
    </lineage>
</organism>
<reference key="1">
    <citation type="journal article" date="2003" name="PLoS Biol.">
        <title>The genome sequence of Caenorhabditis briggsae: a platform for comparative genomics.</title>
        <authorList>
            <person name="Stein L.D."/>
            <person name="Bao Z."/>
            <person name="Blasiar D."/>
            <person name="Blumenthal T."/>
            <person name="Brent M.R."/>
            <person name="Chen N."/>
            <person name="Chinwalla A."/>
            <person name="Clarke L."/>
            <person name="Clee C."/>
            <person name="Coghlan A."/>
            <person name="Coulson A."/>
            <person name="D'Eustachio P."/>
            <person name="Fitch D.H.A."/>
            <person name="Fulton L.A."/>
            <person name="Fulton R.E."/>
            <person name="Griffiths-Jones S."/>
            <person name="Harris T.W."/>
            <person name="Hillier L.W."/>
            <person name="Kamath R."/>
            <person name="Kuwabara P.E."/>
            <person name="Mardis E.R."/>
            <person name="Marra M.A."/>
            <person name="Miner T.L."/>
            <person name="Minx P."/>
            <person name="Mullikin J.C."/>
            <person name="Plumb R.W."/>
            <person name="Rogers J."/>
            <person name="Schein J.E."/>
            <person name="Sohrmann M."/>
            <person name="Spieth J."/>
            <person name="Stajich J.E."/>
            <person name="Wei C."/>
            <person name="Willey D."/>
            <person name="Wilson R.K."/>
            <person name="Durbin R.M."/>
            <person name="Waterston R.H."/>
        </authorList>
    </citation>
    <scope>NUCLEOTIDE SEQUENCE [LARGE SCALE GENOMIC DNA]</scope>
    <source>
        <strain>AF16</strain>
    </source>
</reference>
<keyword id="KW-0143">Chaperone</keyword>
<keyword id="KW-0496">Mitochondrion</keyword>
<keyword id="KW-1185">Reference proteome</keyword>
<keyword id="KW-0809">Transit peptide</keyword>
<evidence type="ECO:0000250" key="1"/>
<evidence type="ECO:0000255" key="2"/>
<evidence type="ECO:0000305" key="3"/>
<protein>
    <recommendedName>
        <fullName>Probable complex I intermediate-associated protein 30, mitochondrial</fullName>
    </recommendedName>
    <alternativeName>
        <fullName>NADH ubiquinone oxidoreductase assembly factor 1</fullName>
    </alternativeName>
</protein>
<accession>Q61FQ3</accession>
<accession>A8XCR5</accession>
<proteinExistence type="inferred from homology"/>
<comment type="function">
    <text evidence="1">Chaperone protein involved in the assembly of the mitochondrial NADH:ubiquinone oxidoreductase complex (complex I). Required for normal growth and reproduction (By similarity).</text>
</comment>
<comment type="subcellular location">
    <subcellularLocation>
        <location evidence="3">Mitochondrion</location>
    </subcellularLocation>
</comment>
<comment type="similarity">
    <text evidence="3">Belongs to the CIA30 family.</text>
</comment>
<feature type="transit peptide" description="Mitochondrion" evidence="2">
    <location>
        <begin position="1"/>
        <end status="unknown"/>
    </location>
</feature>
<feature type="chain" id="PRO_0000251471" description="Probable complex I intermediate-associated protein 30, mitochondrial">
    <location>
        <begin status="unknown"/>
        <end position="340"/>
    </location>
</feature>
<sequence>MISNFTGRLLLPKFRNKLCAFFSKESTSSNSLAKSKTNSELEGYTGKSNLLEKKKVGVFGTSTVPINTNFPNPKGVIGYDPDFSVKELVAELPNTRKTQGAKLAEEIKDAFSNISIEKPELLEDIGFVRHNEARVEYKFDTSEKLDLWKIGCDSDWKEGFSTCSLVNSDRGTAVFSGNISTRVLKDGRVERAGWASMKLEDRKTFNRKKFLSKWRNFSHLLLKVRGDGRSYKIMLHSPLSMDFTWGDSFSHPLHTHGGPYWQYEKIPFSKFFHTVAGRIQDRQYRVNLEDTSSIGIVLMDRIDGDFKLEIDYIGVYNDTTHVEDFAYETYTLPVFNTHGF</sequence>